<keyword id="KW-0687">Ribonucleoprotein</keyword>
<keyword id="KW-0689">Ribosomal protein</keyword>
<keyword id="KW-0694">RNA-binding</keyword>
<keyword id="KW-0699">rRNA-binding</keyword>
<evidence type="ECO:0000255" key="1">
    <source>
        <dbReference type="HAMAP-Rule" id="MF_00501"/>
    </source>
</evidence>
<evidence type="ECO:0000256" key="2">
    <source>
        <dbReference type="SAM" id="MobiDB-lite"/>
    </source>
</evidence>
<evidence type="ECO:0000305" key="3"/>
<organism>
    <name type="scientific">Prochlorococcus marinus (strain MIT 9515)</name>
    <dbReference type="NCBI Taxonomy" id="167542"/>
    <lineage>
        <taxon>Bacteria</taxon>
        <taxon>Bacillati</taxon>
        <taxon>Cyanobacteriota</taxon>
        <taxon>Cyanophyceae</taxon>
        <taxon>Synechococcales</taxon>
        <taxon>Prochlorococcaceae</taxon>
        <taxon>Prochlorococcus</taxon>
    </lineage>
</organism>
<gene>
    <name evidence="1" type="primary">rpmE</name>
    <name evidence="1" type="synonym">rpl31</name>
    <name type="ordered locus">P9515_17121</name>
</gene>
<sequence length="86" mass="9619">MPKSEIHPKWYPDAKVICNGEVVMTTGSTKPELHVDVWSGNHPFFTGTQKILDTEGRVDRFMKKYGMGSADSATSQETKEAKESDK</sequence>
<name>RL31_PROM5</name>
<protein>
    <recommendedName>
        <fullName evidence="1">Large ribosomal subunit protein bL31</fullName>
    </recommendedName>
    <alternativeName>
        <fullName evidence="3">50S ribosomal protein L31</fullName>
    </alternativeName>
</protein>
<dbReference type="EMBL" id="CP000552">
    <property type="protein sequence ID" value="ABM72919.1"/>
    <property type="molecule type" value="Genomic_DNA"/>
</dbReference>
<dbReference type="RefSeq" id="WP_011821011.1">
    <property type="nucleotide sequence ID" value="NC_008817.1"/>
</dbReference>
<dbReference type="STRING" id="167542.P9515_17121"/>
<dbReference type="GeneID" id="60201872"/>
<dbReference type="KEGG" id="pmc:P9515_17121"/>
<dbReference type="eggNOG" id="COG0254">
    <property type="taxonomic scope" value="Bacteria"/>
</dbReference>
<dbReference type="HOGENOM" id="CLU_114306_1_2_3"/>
<dbReference type="OrthoDB" id="9803251at2"/>
<dbReference type="Proteomes" id="UP000001589">
    <property type="component" value="Chromosome"/>
</dbReference>
<dbReference type="GO" id="GO:1990904">
    <property type="term" value="C:ribonucleoprotein complex"/>
    <property type="evidence" value="ECO:0007669"/>
    <property type="project" value="UniProtKB-KW"/>
</dbReference>
<dbReference type="GO" id="GO:0005840">
    <property type="term" value="C:ribosome"/>
    <property type="evidence" value="ECO:0007669"/>
    <property type="project" value="UniProtKB-KW"/>
</dbReference>
<dbReference type="GO" id="GO:0019843">
    <property type="term" value="F:rRNA binding"/>
    <property type="evidence" value="ECO:0007669"/>
    <property type="project" value="UniProtKB-KW"/>
</dbReference>
<dbReference type="GO" id="GO:0003735">
    <property type="term" value="F:structural constituent of ribosome"/>
    <property type="evidence" value="ECO:0007669"/>
    <property type="project" value="InterPro"/>
</dbReference>
<dbReference type="GO" id="GO:0006412">
    <property type="term" value="P:translation"/>
    <property type="evidence" value="ECO:0007669"/>
    <property type="project" value="UniProtKB-UniRule"/>
</dbReference>
<dbReference type="Gene3D" id="4.10.830.30">
    <property type="entry name" value="Ribosomal protein L31"/>
    <property type="match status" value="1"/>
</dbReference>
<dbReference type="HAMAP" id="MF_00501">
    <property type="entry name" value="Ribosomal_bL31_1"/>
    <property type="match status" value="1"/>
</dbReference>
<dbReference type="InterPro" id="IPR034704">
    <property type="entry name" value="Ribosomal_bL28/bL31-like_sf"/>
</dbReference>
<dbReference type="InterPro" id="IPR002150">
    <property type="entry name" value="Ribosomal_bL31"/>
</dbReference>
<dbReference type="InterPro" id="IPR027491">
    <property type="entry name" value="Ribosomal_bL31_A"/>
</dbReference>
<dbReference type="InterPro" id="IPR042105">
    <property type="entry name" value="Ribosomal_bL31_sf"/>
</dbReference>
<dbReference type="NCBIfam" id="TIGR00105">
    <property type="entry name" value="L31"/>
    <property type="match status" value="1"/>
</dbReference>
<dbReference type="NCBIfam" id="NF000612">
    <property type="entry name" value="PRK00019.1"/>
    <property type="match status" value="1"/>
</dbReference>
<dbReference type="NCBIfam" id="NF001809">
    <property type="entry name" value="PRK00528.1"/>
    <property type="match status" value="1"/>
</dbReference>
<dbReference type="PANTHER" id="PTHR33280">
    <property type="entry name" value="50S RIBOSOMAL PROTEIN L31, CHLOROPLASTIC"/>
    <property type="match status" value="1"/>
</dbReference>
<dbReference type="PANTHER" id="PTHR33280:SF1">
    <property type="entry name" value="LARGE RIBOSOMAL SUBUNIT PROTEIN BL31C"/>
    <property type="match status" value="1"/>
</dbReference>
<dbReference type="Pfam" id="PF01197">
    <property type="entry name" value="Ribosomal_L31"/>
    <property type="match status" value="1"/>
</dbReference>
<dbReference type="PRINTS" id="PR01249">
    <property type="entry name" value="RIBOSOMALL31"/>
</dbReference>
<dbReference type="SUPFAM" id="SSF143800">
    <property type="entry name" value="L28p-like"/>
    <property type="match status" value="1"/>
</dbReference>
<dbReference type="PROSITE" id="PS01143">
    <property type="entry name" value="RIBOSOMAL_L31"/>
    <property type="match status" value="1"/>
</dbReference>
<comment type="function">
    <text evidence="1">Binds the 23S rRNA.</text>
</comment>
<comment type="subunit">
    <text evidence="1">Part of the 50S ribosomal subunit.</text>
</comment>
<comment type="similarity">
    <text evidence="1">Belongs to the bacterial ribosomal protein bL31 family. Type A subfamily.</text>
</comment>
<proteinExistence type="inferred from homology"/>
<feature type="chain" id="PRO_1000126692" description="Large ribosomal subunit protein bL31">
    <location>
        <begin position="1"/>
        <end position="86"/>
    </location>
</feature>
<feature type="region of interest" description="Disordered" evidence="2">
    <location>
        <begin position="66"/>
        <end position="86"/>
    </location>
</feature>
<feature type="compositionally biased region" description="Basic and acidic residues" evidence="2">
    <location>
        <begin position="77"/>
        <end position="86"/>
    </location>
</feature>
<accession>A2BYQ8</accession>
<reference key="1">
    <citation type="journal article" date="2007" name="PLoS Genet.">
        <title>Patterns and implications of gene gain and loss in the evolution of Prochlorococcus.</title>
        <authorList>
            <person name="Kettler G.C."/>
            <person name="Martiny A.C."/>
            <person name="Huang K."/>
            <person name="Zucker J."/>
            <person name="Coleman M.L."/>
            <person name="Rodrigue S."/>
            <person name="Chen F."/>
            <person name="Lapidus A."/>
            <person name="Ferriera S."/>
            <person name="Johnson J."/>
            <person name="Steglich C."/>
            <person name="Church G.M."/>
            <person name="Richardson P."/>
            <person name="Chisholm S.W."/>
        </authorList>
    </citation>
    <scope>NUCLEOTIDE SEQUENCE [LARGE SCALE GENOMIC DNA]</scope>
    <source>
        <strain>MIT 9515</strain>
    </source>
</reference>